<gene>
    <name type="primary">UL26</name>
</gene>
<feature type="chain" id="PRO_0000115315" description="Tegument protein UL26">
    <location>
        <begin position="1"/>
        <end position="222"/>
    </location>
</feature>
<feature type="splice variant" id="VSP_036205" description="In isoform 21kDa." evidence="3">
    <location>
        <begin position="1"/>
        <end position="34"/>
    </location>
</feature>
<organismHost>
    <name type="scientific">Homo sapiens</name>
    <name type="common">Human</name>
    <dbReference type="NCBI Taxonomy" id="9606"/>
</organismHost>
<keyword id="KW-0010">Activator</keyword>
<keyword id="KW-0024">Alternative initiation</keyword>
<keyword id="KW-1048">Host nucleus</keyword>
<keyword id="KW-1185">Reference proteome</keyword>
<keyword id="KW-0832">Ubl conjugation</keyword>
<keyword id="KW-0946">Virion</keyword>
<keyword id="KW-0920">Virion tegument</keyword>
<comment type="function">
    <text evidence="1 2">Plays a role in the inhibition of host NF-kappa-B. This inhibition affects both the canonical and the non-canonical pathways. Blocks the induction of host IKK phosphorylation. May also influence the normal phosphorylation state of several tegument proteins including pp28 in virions. Also suppresses virus-induced ISGylation independent of its own ISGylation (By similarity).</text>
</comment>
<comment type="subunit">
    <text evidence="1">Interacts with UL25. Interacts with ISGylation machinery components ISG15, UBA7 and HERC5; these interactions inhibit global protein ISGylation.</text>
</comment>
<comment type="subcellular location">
    <subcellularLocation>
        <location evidence="2">Virion tegument</location>
    </subcellularLocation>
    <subcellularLocation>
        <location evidence="1">Host nucleus</location>
    </subcellularLocation>
    <text evidence="1">Also found in dense bodies.</text>
</comment>
<comment type="alternative products">
    <event type="alternative initiation"/>
    <isoform>
        <id>P16762-1</id>
        <name>27kDa</name>
        <sequence type="displayed"/>
    </isoform>
    <isoform>
        <id>P16762-2</id>
        <name>21kDa</name>
        <sequence type="described" ref="VSP_036205"/>
    </isoform>
</comment>
<comment type="PTM">
    <text evidence="1">ISGylated; ISGylation regulates UL26 stability and inhibits its activities to suppress NF-kappa-B signaling.</text>
</comment>
<comment type="miscellaneous">
    <text>Isoform 21 kDa is first detected at 6 hours postinfection. Its expression increases at later times, when the additional 27kDa isoform is also be observed.</text>
</comment>
<comment type="similarity">
    <text evidence="3">Belongs to the herpesviridae US22 family.</text>
</comment>
<comment type="sequence caution" evidence="3">
    <conflict type="erroneous initiation">
        <sequence resource="EMBL-CDS" id="CAA35425"/>
    </conflict>
</comment>
<comment type="sequence caution" evidence="3">
    <conflict type="erroneous initiation">
        <sequence resource="EMBL-CDS" id="DAA00130"/>
    </conflict>
</comment>
<name>UL26_HCMVA</name>
<dbReference type="EMBL" id="X17403">
    <property type="protein sequence ID" value="CAA35425.1"/>
    <property type="status" value="ALT_INIT"/>
    <property type="molecule type" value="Genomic_DNA"/>
</dbReference>
<dbReference type="EMBL" id="BK000394">
    <property type="protein sequence ID" value="DAA00130.1"/>
    <property type="status" value="ALT_INIT"/>
    <property type="molecule type" value="Genomic_DNA"/>
</dbReference>
<dbReference type="PIR" id="S09789">
    <property type="entry name" value="S09789"/>
</dbReference>
<dbReference type="Proteomes" id="UP000008991">
    <property type="component" value="Segment"/>
</dbReference>
<dbReference type="Proteomes" id="UP000008992">
    <property type="component" value="Segment"/>
</dbReference>
<dbReference type="GO" id="GO:0042025">
    <property type="term" value="C:host cell nucleus"/>
    <property type="evidence" value="ECO:0007669"/>
    <property type="project" value="UniProtKB-SubCell"/>
</dbReference>
<dbReference type="GO" id="GO:0019033">
    <property type="term" value="C:viral tegument"/>
    <property type="evidence" value="ECO:0007669"/>
    <property type="project" value="UniProtKB-SubCell"/>
</dbReference>
<dbReference type="InterPro" id="IPR003360">
    <property type="entry name" value="US22-like"/>
</dbReference>
<dbReference type="Pfam" id="PF02393">
    <property type="entry name" value="US22"/>
    <property type="match status" value="1"/>
</dbReference>
<sequence length="222" mass="24867">MYAVFGLTRSEVTPHEAAAARYKHRGVIDRQGAAMTSRRAPDGGLNLDDFMRRQRGRHLDLPYPRGYTLFVCDVEETILTPRDVEYWKLLVVTQGQLRVIGTIGLANLFSWDRSVAGVAADGSVLCYEISRENFVVRAADSLPQLLERGLLHSYFEDVERAAQGRLRHGNRSGLRRDADGQVIRESACYVSRVLLRHRVTPGKQEITDAMFEAGNVPSALLP</sequence>
<organism>
    <name type="scientific">Human cytomegalovirus (strain AD169)</name>
    <name type="common">HHV-5</name>
    <name type="synonym">Human herpesvirus 5</name>
    <dbReference type="NCBI Taxonomy" id="10360"/>
    <lineage>
        <taxon>Viruses</taxon>
        <taxon>Duplodnaviria</taxon>
        <taxon>Heunggongvirae</taxon>
        <taxon>Peploviricota</taxon>
        <taxon>Herviviricetes</taxon>
        <taxon>Herpesvirales</taxon>
        <taxon>Orthoherpesviridae</taxon>
        <taxon>Betaherpesvirinae</taxon>
        <taxon>Cytomegalovirus</taxon>
        <taxon>Cytomegalovirus humanbeta5</taxon>
        <taxon>Human cytomegalovirus</taxon>
    </lineage>
</organism>
<protein>
    <recommendedName>
        <fullName>Tegument protein UL26</fullName>
    </recommendedName>
</protein>
<evidence type="ECO:0000250" key="1">
    <source>
        <dbReference type="UniProtKB" id="F5HGG3"/>
    </source>
</evidence>
<evidence type="ECO:0000269" key="2">
    <source>
    </source>
</evidence>
<evidence type="ECO:0000305" key="3"/>
<proteinExistence type="inferred from homology"/>
<reference key="1">
    <citation type="journal article" date="1990" name="Curr. Top. Microbiol. Immunol.">
        <title>Analysis of the protein-coding content of the sequence of human cytomegalovirus strain AD169.</title>
        <authorList>
            <person name="Chee M.S."/>
            <person name="Bankier A.T."/>
            <person name="Beck S."/>
            <person name="Bohni R."/>
            <person name="Brown C.M."/>
            <person name="Cerny R."/>
            <person name="Horsnell T."/>
            <person name="Hutchison C.A. III"/>
            <person name="Kouzarides T."/>
            <person name="Martignetti J.A."/>
            <person name="Preddie E."/>
            <person name="Satchwell S.C."/>
            <person name="Tomlinson P."/>
            <person name="Weston K.M."/>
            <person name="Barrell B.G."/>
        </authorList>
    </citation>
    <scope>NUCLEOTIDE SEQUENCE [LARGE SCALE GENOMIC DNA]</scope>
</reference>
<reference key="2">
    <citation type="journal article" date="2003" name="J. Gen. Virol.">
        <title>The human cytomegalovirus genome revisited: comparison with the chimpanzee cytomegalovirus genome.</title>
        <authorList>
            <person name="Davison A.J."/>
            <person name="Dolan A."/>
            <person name="Akter P."/>
            <person name="Addison C."/>
            <person name="Dargan D.J."/>
            <person name="Alcendor D.J."/>
            <person name="McGeoch D.J."/>
            <person name="Hayward G.S."/>
        </authorList>
    </citation>
    <scope>GENOME REANNOTATION</scope>
</reference>
<reference key="3">
    <citation type="journal article" date="2003" name="J. Gen. Virol.">
        <authorList>
            <person name="Davison A.J."/>
            <person name="Dolan A."/>
            <person name="Akter P."/>
            <person name="Addison C."/>
            <person name="Dargan D.J."/>
            <person name="Alcendor D.J."/>
            <person name="McGeoch D.J."/>
            <person name="Hayward G.S."/>
        </authorList>
    </citation>
    <scope>ERRATUM OF PUBMED:12533697</scope>
</reference>
<reference key="4">
    <citation type="journal article" date="2002" name="J. Virol.">
        <title>Open reading frame UL26 of human cytomegalovirus encodes a novel tegument protein that contains a strong transcriptional activation domain.</title>
        <authorList>
            <person name="Stamminger T."/>
            <person name="Gstaiger M."/>
            <person name="Weinzierl K."/>
            <person name="Lorz K."/>
            <person name="Winkler M."/>
            <person name="Schaffner W."/>
        </authorList>
    </citation>
    <scope>IDENTIFICATION</scope>
    <scope>FUNCTION</scope>
    <scope>SUBCELLULAR LOCATION</scope>
    <scope>ALTERNATIVE INITIATION</scope>
</reference>
<reference key="5">
    <citation type="journal article" date="2004" name="J. Virol.">
        <title>Identification of proteins in human cytomegalovirus (HCMV) particles: the HCMV proteome.</title>
        <authorList>
            <person name="Varnum S.M."/>
            <person name="Streblow D.N."/>
            <person name="Monroe M.E."/>
            <person name="Smith P."/>
            <person name="Auberry K.J."/>
            <person name="Pasa-Tolic L."/>
            <person name="Wang D."/>
            <person name="Camp D.G. II"/>
            <person name="Rodland K."/>
            <person name="Wiley S."/>
            <person name="Britt W."/>
            <person name="Shenk T."/>
            <person name="Smith R.D."/>
            <person name="Nelson J.A."/>
        </authorList>
    </citation>
    <scope>IDENTIFICATION</scope>
</reference>
<reference key="6">
    <citation type="journal article" date="2004" name="J. Virol.">
        <authorList>
            <person name="Varnum S.M."/>
            <person name="Streblow D.N."/>
            <person name="Monroe M.E."/>
            <person name="Smith P."/>
            <person name="Auberry K.J."/>
            <person name="Pasa-Tolic L."/>
            <person name="Wang D."/>
            <person name="Camp D.G. II"/>
            <person name="Rodland K."/>
            <person name="Wiley S."/>
            <person name="Britt W."/>
            <person name="Shenk T."/>
            <person name="Smith R.D."/>
            <person name="Nelson J.A."/>
        </authorList>
    </citation>
    <scope>ERRATUM OF PUBMED:15452216</scope>
</reference>
<accession>P16762</accession>
<accession>Q7M6Q7</accession>